<name>HSP1_TRAVT</name>
<protein>
    <recommendedName>
        <fullName>Sperm protamine P1</fullName>
    </recommendedName>
</protein>
<gene>
    <name type="primary">PRM1</name>
</gene>
<reference key="1">
    <citation type="submission" date="1998-10" db="EMBL/GenBank/DDBJ databases">
        <title>Positive Darwinian selection on the lineage leading to humans.</title>
        <authorList>
            <person name="Karanth P.K."/>
            <person name="Stewart C.-B."/>
            <person name="Holt R.A."/>
            <person name="de Koning J."/>
            <person name="Messier W."/>
        </authorList>
    </citation>
    <scope>NUCLEOTIDE SEQUENCE [GENOMIC DNA]</scope>
</reference>
<reference key="2">
    <citation type="submission" date="2000-08" db="EMBL/GenBank/DDBJ databases">
        <title>Molecular systematics of the langurs.</title>
        <authorList>
            <person name="Karanth P.K."/>
            <person name="Singh L."/>
            <person name="Stewart C.-B."/>
        </authorList>
    </citation>
    <scope>NUCLEOTIDE SEQUENCE [GENOMIC DNA]</scope>
    <source>
        <strain>Isolate PF1</strain>
    </source>
</reference>
<sequence>MARYRRCRSQSRSRCCRPRRRCRRRRRSCRARRRATRCCRRRYRLRCRRY</sequence>
<evidence type="ECO:0000250" key="1"/>
<evidence type="ECO:0000305" key="2"/>
<organism>
    <name type="scientific">Trachypithecus vetulus</name>
    <name type="common">Purple-faced langur</name>
    <name type="synonym">Semnopithecus vetulus</name>
    <dbReference type="NCBI Taxonomy" id="54137"/>
    <lineage>
        <taxon>Eukaryota</taxon>
        <taxon>Metazoa</taxon>
        <taxon>Chordata</taxon>
        <taxon>Craniata</taxon>
        <taxon>Vertebrata</taxon>
        <taxon>Euteleostomi</taxon>
        <taxon>Mammalia</taxon>
        <taxon>Eutheria</taxon>
        <taxon>Euarchontoglires</taxon>
        <taxon>Primates</taxon>
        <taxon>Haplorrhini</taxon>
        <taxon>Catarrhini</taxon>
        <taxon>Cercopithecidae</taxon>
        <taxon>Colobinae</taxon>
        <taxon>Trachypithecus</taxon>
    </lineage>
</organism>
<proteinExistence type="evidence at transcript level"/>
<feature type="chain" id="PRO_0000191586" description="Sperm protamine P1">
    <location>
        <begin position="1"/>
        <end position="50"/>
    </location>
</feature>
<keyword id="KW-0158">Chromosome</keyword>
<keyword id="KW-0217">Developmental protein</keyword>
<keyword id="KW-0221">Differentiation</keyword>
<keyword id="KW-0226">DNA condensation</keyword>
<keyword id="KW-0238">DNA-binding</keyword>
<keyword id="KW-0544">Nucleosome core</keyword>
<keyword id="KW-0539">Nucleus</keyword>
<keyword id="KW-0744">Spermatogenesis</keyword>
<dbReference type="EMBL" id="AF119236">
    <property type="protein sequence ID" value="AAG42160.1"/>
    <property type="molecule type" value="Genomic_DNA"/>
</dbReference>
<dbReference type="EMBL" id="AF294855">
    <property type="protein sequence ID" value="AAM68938.1"/>
    <property type="molecule type" value="Genomic_DNA"/>
</dbReference>
<dbReference type="GO" id="GO:0000786">
    <property type="term" value="C:nucleosome"/>
    <property type="evidence" value="ECO:0007669"/>
    <property type="project" value="UniProtKB-KW"/>
</dbReference>
<dbReference type="GO" id="GO:0005634">
    <property type="term" value="C:nucleus"/>
    <property type="evidence" value="ECO:0007669"/>
    <property type="project" value="UniProtKB-SubCell"/>
</dbReference>
<dbReference type="GO" id="GO:0003677">
    <property type="term" value="F:DNA binding"/>
    <property type="evidence" value="ECO:0007669"/>
    <property type="project" value="UniProtKB-KW"/>
</dbReference>
<dbReference type="GO" id="GO:0030261">
    <property type="term" value="P:chromosome condensation"/>
    <property type="evidence" value="ECO:0007669"/>
    <property type="project" value="UniProtKB-KW"/>
</dbReference>
<dbReference type="GO" id="GO:0035092">
    <property type="term" value="P:sperm DNA condensation"/>
    <property type="evidence" value="ECO:0007669"/>
    <property type="project" value="InterPro"/>
</dbReference>
<dbReference type="InterPro" id="IPR000221">
    <property type="entry name" value="Protamine_P1"/>
</dbReference>
<dbReference type="Pfam" id="PF00260">
    <property type="entry name" value="Protamine_P1"/>
    <property type="match status" value="1"/>
</dbReference>
<dbReference type="PROSITE" id="PS00048">
    <property type="entry name" value="PROTAMINE_P1"/>
    <property type="match status" value="1"/>
</dbReference>
<accession>Q7JIY0</accession>
<comment type="function">
    <text evidence="1">Protamines substitute for histones in the chromatin of sperm during the haploid phase of spermatogenesis. They compact sperm DNA into a highly condensed, stable and inactive complex (By similarity).</text>
</comment>
<comment type="subcellular location">
    <subcellularLocation>
        <location evidence="1">Nucleus</location>
    </subcellularLocation>
    <subcellularLocation>
        <location evidence="1">Chromosome</location>
    </subcellularLocation>
</comment>
<comment type="tissue specificity">
    <text>Testis.</text>
</comment>
<comment type="similarity">
    <text evidence="2">Belongs to the protamine P1 family.</text>
</comment>